<feature type="chain" id="PRO_0000162991" description="NADPH-dependent 7-cyano-7-deazaguanine reductase">
    <location>
        <begin position="1"/>
        <end position="121"/>
    </location>
</feature>
<feature type="active site" description="Thioimide intermediate" evidence="1">
    <location>
        <position position="36"/>
    </location>
</feature>
<feature type="active site" description="Proton donor" evidence="1">
    <location>
        <position position="43"/>
    </location>
</feature>
<feature type="binding site" evidence="1">
    <location>
        <begin position="58"/>
        <end position="60"/>
    </location>
    <ligand>
        <name>substrate</name>
    </ligand>
</feature>
<feature type="binding site" evidence="1">
    <location>
        <begin position="77"/>
        <end position="78"/>
    </location>
    <ligand>
        <name>substrate</name>
    </ligand>
</feature>
<evidence type="ECO:0000255" key="1">
    <source>
        <dbReference type="HAMAP-Rule" id="MF_00818"/>
    </source>
</evidence>
<reference key="1">
    <citation type="journal article" date="2003" name="Proc. Natl. Acad. Sci. U.S.A.">
        <title>Complete genome sequence of the marine planctomycete Pirellula sp. strain 1.</title>
        <authorList>
            <person name="Gloeckner F.O."/>
            <person name="Kube M."/>
            <person name="Bauer M."/>
            <person name="Teeling H."/>
            <person name="Lombardot T."/>
            <person name="Ludwig W."/>
            <person name="Gade D."/>
            <person name="Beck A."/>
            <person name="Borzym K."/>
            <person name="Heitmann K."/>
            <person name="Rabus R."/>
            <person name="Schlesner H."/>
            <person name="Amann R."/>
            <person name="Reinhardt R."/>
        </authorList>
    </citation>
    <scope>NUCLEOTIDE SEQUENCE [LARGE SCALE GENOMIC DNA]</scope>
    <source>
        <strain>DSM 10527 / NCIMB 13988 / SH1</strain>
    </source>
</reference>
<keyword id="KW-0963">Cytoplasm</keyword>
<keyword id="KW-0521">NADP</keyword>
<keyword id="KW-0560">Oxidoreductase</keyword>
<keyword id="KW-0671">Queuosine biosynthesis</keyword>
<keyword id="KW-1185">Reference proteome</keyword>
<proteinExistence type="inferred from homology"/>
<dbReference type="EC" id="1.7.1.13" evidence="1"/>
<dbReference type="EMBL" id="BX294137">
    <property type="protein sequence ID" value="CAD72755.1"/>
    <property type="molecule type" value="Genomic_DNA"/>
</dbReference>
<dbReference type="RefSeq" id="NP_865071.1">
    <property type="nucleotide sequence ID" value="NC_005027.1"/>
</dbReference>
<dbReference type="RefSeq" id="WP_007324336.1">
    <property type="nucleotide sequence ID" value="NC_005027.1"/>
</dbReference>
<dbReference type="SMR" id="Q7UVG9"/>
<dbReference type="STRING" id="243090.RB2642"/>
<dbReference type="EnsemblBacteria" id="CAD72755">
    <property type="protein sequence ID" value="CAD72755"/>
    <property type="gene ID" value="RB2642"/>
</dbReference>
<dbReference type="KEGG" id="rba:RB2642"/>
<dbReference type="PATRIC" id="fig|243090.15.peg.1213"/>
<dbReference type="eggNOG" id="COG0780">
    <property type="taxonomic scope" value="Bacteria"/>
</dbReference>
<dbReference type="HOGENOM" id="CLU_102489_1_0_0"/>
<dbReference type="InParanoid" id="Q7UVG9"/>
<dbReference type="OrthoDB" id="9795077at2"/>
<dbReference type="UniPathway" id="UPA00392"/>
<dbReference type="Proteomes" id="UP000001025">
    <property type="component" value="Chromosome"/>
</dbReference>
<dbReference type="GO" id="GO:0005829">
    <property type="term" value="C:cytosol"/>
    <property type="evidence" value="ECO:0000318"/>
    <property type="project" value="GO_Central"/>
</dbReference>
<dbReference type="GO" id="GO:0033739">
    <property type="term" value="F:preQ1 synthase activity"/>
    <property type="evidence" value="ECO:0000318"/>
    <property type="project" value="GO_Central"/>
</dbReference>
<dbReference type="GO" id="GO:0008616">
    <property type="term" value="P:queuosine biosynthetic process"/>
    <property type="evidence" value="ECO:0000318"/>
    <property type="project" value="GO_Central"/>
</dbReference>
<dbReference type="GO" id="GO:0006400">
    <property type="term" value="P:tRNA modification"/>
    <property type="evidence" value="ECO:0007669"/>
    <property type="project" value="UniProtKB-UniRule"/>
</dbReference>
<dbReference type="Gene3D" id="3.30.1130.10">
    <property type="match status" value="1"/>
</dbReference>
<dbReference type="HAMAP" id="MF_00818">
    <property type="entry name" value="QueF_type1"/>
    <property type="match status" value="1"/>
</dbReference>
<dbReference type="InterPro" id="IPR043133">
    <property type="entry name" value="GTP-CH-I_C/QueF"/>
</dbReference>
<dbReference type="InterPro" id="IPR050084">
    <property type="entry name" value="NADPH_dep_7-cyano-7-deazaG_red"/>
</dbReference>
<dbReference type="InterPro" id="IPR029500">
    <property type="entry name" value="QueF"/>
</dbReference>
<dbReference type="InterPro" id="IPR016856">
    <property type="entry name" value="QueF_type1"/>
</dbReference>
<dbReference type="NCBIfam" id="TIGR03139">
    <property type="entry name" value="QueF-II"/>
    <property type="match status" value="1"/>
</dbReference>
<dbReference type="PANTHER" id="PTHR34354">
    <property type="entry name" value="NADPH-DEPENDENT 7-CYANO-7-DEAZAGUANINE REDUCTASE"/>
    <property type="match status" value="1"/>
</dbReference>
<dbReference type="PANTHER" id="PTHR34354:SF1">
    <property type="entry name" value="NADPH-DEPENDENT 7-CYANO-7-DEAZAGUANINE REDUCTASE"/>
    <property type="match status" value="1"/>
</dbReference>
<dbReference type="Pfam" id="PF14489">
    <property type="entry name" value="QueF"/>
    <property type="match status" value="1"/>
</dbReference>
<dbReference type="PIRSF" id="PIRSF027377">
    <property type="entry name" value="Nitrile_oxidored_QueF"/>
    <property type="match status" value="1"/>
</dbReference>
<dbReference type="SUPFAM" id="SSF55620">
    <property type="entry name" value="Tetrahydrobiopterin biosynthesis enzymes-like"/>
    <property type="match status" value="1"/>
</dbReference>
<protein>
    <recommendedName>
        <fullName evidence="1">NADPH-dependent 7-cyano-7-deazaguanine reductase</fullName>
        <ecNumber evidence="1">1.7.1.13</ecNumber>
    </recommendedName>
    <alternativeName>
        <fullName evidence="1">7-cyano-7-carbaguanine reductase</fullName>
    </alternativeName>
    <alternativeName>
        <fullName evidence="1">NADPH-dependent nitrile oxidoreductase</fullName>
    </alternativeName>
    <alternativeName>
        <fullName evidence="1">PreQ(0) reductase</fullName>
    </alternativeName>
</protein>
<accession>Q7UVG9</accession>
<sequence>MSDTASFRDTLEVFENPAPTRNFTIEHHCPEFTSVCPKTGQPDYGTIVFTYVPDRVCVELKSLKMYLQKFRNEGIFYEQVTNRILDDFVAVVQPRKVTVESKWTPRGGLNSNIIVTYPDEA</sequence>
<gene>
    <name evidence="1" type="primary">queF</name>
    <name type="ordered locus">RB2642</name>
</gene>
<comment type="function">
    <text evidence="1">Catalyzes the NADPH-dependent reduction of 7-cyano-7-deazaguanine (preQ0) to 7-aminomethyl-7-deazaguanine (preQ1).</text>
</comment>
<comment type="catalytic activity">
    <reaction evidence="1">
        <text>7-aminomethyl-7-carbaguanine + 2 NADP(+) = 7-cyano-7-deazaguanine + 2 NADPH + 3 H(+)</text>
        <dbReference type="Rhea" id="RHEA:13409"/>
        <dbReference type="ChEBI" id="CHEBI:15378"/>
        <dbReference type="ChEBI" id="CHEBI:45075"/>
        <dbReference type="ChEBI" id="CHEBI:57783"/>
        <dbReference type="ChEBI" id="CHEBI:58349"/>
        <dbReference type="ChEBI" id="CHEBI:58703"/>
        <dbReference type="EC" id="1.7.1.13"/>
    </reaction>
</comment>
<comment type="pathway">
    <text evidence="1">tRNA modification; tRNA-queuosine biosynthesis.</text>
</comment>
<comment type="subcellular location">
    <subcellularLocation>
        <location evidence="1">Cytoplasm</location>
    </subcellularLocation>
</comment>
<comment type="similarity">
    <text evidence="1">Belongs to the GTP cyclohydrolase I family. QueF type 1 subfamily.</text>
</comment>
<organism>
    <name type="scientific">Rhodopirellula baltica (strain DSM 10527 / NCIMB 13988 / SH1)</name>
    <dbReference type="NCBI Taxonomy" id="243090"/>
    <lineage>
        <taxon>Bacteria</taxon>
        <taxon>Pseudomonadati</taxon>
        <taxon>Planctomycetota</taxon>
        <taxon>Planctomycetia</taxon>
        <taxon>Pirellulales</taxon>
        <taxon>Pirellulaceae</taxon>
        <taxon>Rhodopirellula</taxon>
    </lineage>
</organism>
<name>QUEF_RHOBA</name>